<protein>
    <recommendedName>
        <fullName evidence="1">Probable [Fe-S]-dependent transcriptional repressor</fullName>
    </recommendedName>
</protein>
<sequence>MASLIQVRDLLALQGRMEAMQISRTLHTPQPMIDAMLNQLENMGRAVRIQEDPDGCLSGSCKSCPEGKACLREWWTLR</sequence>
<evidence type="ECO:0000255" key="1">
    <source>
        <dbReference type="HAMAP-Rule" id="MF_01586"/>
    </source>
</evidence>
<reference key="1">
    <citation type="submission" date="2007-08" db="EMBL/GenBank/DDBJ databases">
        <authorList>
            <consortium name="The Citrobacter koseri Genome Sequencing Project"/>
            <person name="McClelland M."/>
            <person name="Sanderson E.K."/>
            <person name="Porwollik S."/>
            <person name="Spieth J."/>
            <person name="Clifton W.S."/>
            <person name="Latreille P."/>
            <person name="Courtney L."/>
            <person name="Wang C."/>
            <person name="Pepin K."/>
            <person name="Bhonagiri V."/>
            <person name="Nash W."/>
            <person name="Johnson M."/>
            <person name="Thiruvilangam P."/>
            <person name="Wilson R."/>
        </authorList>
    </citation>
    <scope>NUCLEOTIDE SEQUENCE [LARGE SCALE GENOMIC DNA]</scope>
    <source>
        <strain>ATCC BAA-895 / CDC 4225-83 / SGSC4696</strain>
    </source>
</reference>
<comment type="function">
    <text evidence="1">May function as a transcriptional regulator that controls feoABC expression.</text>
</comment>
<comment type="similarity">
    <text evidence="1">Belongs to the FeoC family.</text>
</comment>
<feature type="chain" id="PRO_0000313055" description="Probable [Fe-S]-dependent transcriptional repressor">
    <location>
        <begin position="1"/>
        <end position="78"/>
    </location>
</feature>
<feature type="binding site" evidence="1">
    <location>
        <position position="56"/>
    </location>
    <ligand>
        <name>iron-sulfur cluster</name>
        <dbReference type="ChEBI" id="CHEBI:30408"/>
    </ligand>
</feature>
<feature type="binding site" evidence="1">
    <location>
        <position position="61"/>
    </location>
    <ligand>
        <name>iron-sulfur cluster</name>
        <dbReference type="ChEBI" id="CHEBI:30408"/>
    </ligand>
</feature>
<feature type="binding site" evidence="1">
    <location>
        <position position="64"/>
    </location>
    <ligand>
        <name>iron-sulfur cluster</name>
        <dbReference type="ChEBI" id="CHEBI:30408"/>
    </ligand>
</feature>
<feature type="binding site" evidence="1">
    <location>
        <position position="70"/>
    </location>
    <ligand>
        <name>iron-sulfur cluster</name>
        <dbReference type="ChEBI" id="CHEBI:30408"/>
    </ligand>
</feature>
<gene>
    <name evidence="1" type="primary">feoC</name>
    <name type="ordered locus">CKO_04832</name>
</gene>
<name>FEOC_CITK8</name>
<dbReference type="EMBL" id="CP000822">
    <property type="protein sequence ID" value="ABV15877.1"/>
    <property type="molecule type" value="Genomic_DNA"/>
</dbReference>
<dbReference type="RefSeq" id="WP_012135518.1">
    <property type="nucleotide sequence ID" value="NC_009792.1"/>
</dbReference>
<dbReference type="SMR" id="A8AQW4"/>
<dbReference type="STRING" id="290338.CKO_04832"/>
<dbReference type="GeneID" id="45138332"/>
<dbReference type="KEGG" id="cko:CKO_04832"/>
<dbReference type="HOGENOM" id="CLU_189182_0_0_6"/>
<dbReference type="OrthoDB" id="6903254at2"/>
<dbReference type="Proteomes" id="UP000008148">
    <property type="component" value="Chromosome"/>
</dbReference>
<dbReference type="GO" id="GO:0003677">
    <property type="term" value="F:DNA binding"/>
    <property type="evidence" value="ECO:0007669"/>
    <property type="project" value="UniProtKB-KW"/>
</dbReference>
<dbReference type="GO" id="GO:0005506">
    <property type="term" value="F:iron ion binding"/>
    <property type="evidence" value="ECO:0007669"/>
    <property type="project" value="UniProtKB-UniRule"/>
</dbReference>
<dbReference type="GO" id="GO:0051536">
    <property type="term" value="F:iron-sulfur cluster binding"/>
    <property type="evidence" value="ECO:0007669"/>
    <property type="project" value="UniProtKB-KW"/>
</dbReference>
<dbReference type="Gene3D" id="1.10.10.10">
    <property type="entry name" value="Winged helix-like DNA-binding domain superfamily/Winged helix DNA-binding domain"/>
    <property type="match status" value="1"/>
</dbReference>
<dbReference type="HAMAP" id="MF_01586">
    <property type="entry name" value="FeoC"/>
    <property type="match status" value="1"/>
</dbReference>
<dbReference type="InterPro" id="IPR023732">
    <property type="entry name" value="FeoC"/>
</dbReference>
<dbReference type="InterPro" id="IPR015102">
    <property type="entry name" value="Tscrpt_reg_HTH_FeoC"/>
</dbReference>
<dbReference type="InterPro" id="IPR036388">
    <property type="entry name" value="WH-like_DNA-bd_sf"/>
</dbReference>
<dbReference type="InterPro" id="IPR036390">
    <property type="entry name" value="WH_DNA-bd_sf"/>
</dbReference>
<dbReference type="NCBIfam" id="NF011960">
    <property type="entry name" value="PRK15431.1"/>
    <property type="match status" value="1"/>
</dbReference>
<dbReference type="Pfam" id="PF09012">
    <property type="entry name" value="FeoC"/>
    <property type="match status" value="1"/>
</dbReference>
<dbReference type="SUPFAM" id="SSF46785">
    <property type="entry name" value="Winged helix' DNA-binding domain"/>
    <property type="match status" value="1"/>
</dbReference>
<keyword id="KW-0238">DNA-binding</keyword>
<keyword id="KW-0408">Iron</keyword>
<keyword id="KW-0411">Iron-sulfur</keyword>
<keyword id="KW-0479">Metal-binding</keyword>
<keyword id="KW-1185">Reference proteome</keyword>
<keyword id="KW-0678">Repressor</keyword>
<keyword id="KW-0804">Transcription</keyword>
<keyword id="KW-0805">Transcription regulation</keyword>
<proteinExistence type="inferred from homology"/>
<accession>A8AQW4</accession>
<organism>
    <name type="scientific">Citrobacter koseri (strain ATCC BAA-895 / CDC 4225-83 / SGSC4696)</name>
    <dbReference type="NCBI Taxonomy" id="290338"/>
    <lineage>
        <taxon>Bacteria</taxon>
        <taxon>Pseudomonadati</taxon>
        <taxon>Pseudomonadota</taxon>
        <taxon>Gammaproteobacteria</taxon>
        <taxon>Enterobacterales</taxon>
        <taxon>Enterobacteriaceae</taxon>
        <taxon>Citrobacter</taxon>
    </lineage>
</organism>